<name>RS15_CAMC1</name>
<gene>
    <name evidence="1" type="primary">rpsO</name>
    <name type="ordered locus">Ccon26_12830</name>
    <name type="ORF">CCC13826_2033</name>
</gene>
<comment type="function">
    <text evidence="1">One of the primary rRNA binding proteins, it binds directly to 16S rRNA where it helps nucleate assembly of the platform of the 30S subunit by binding and bridging several RNA helices of the 16S rRNA.</text>
</comment>
<comment type="function">
    <text evidence="1">Forms an intersubunit bridge (bridge B4) with the 23S rRNA of the 50S subunit in the ribosome.</text>
</comment>
<comment type="subunit">
    <text evidence="1">Part of the 30S ribosomal subunit. Forms a bridge to the 50S subunit in the 70S ribosome, contacting the 23S rRNA.</text>
</comment>
<comment type="similarity">
    <text evidence="1">Belongs to the universal ribosomal protein uS15 family.</text>
</comment>
<protein>
    <recommendedName>
        <fullName evidence="1">Small ribosomal subunit protein uS15</fullName>
    </recommendedName>
    <alternativeName>
        <fullName evidence="2">30S ribosomal protein S15</fullName>
    </alternativeName>
</protein>
<feature type="chain" id="PRO_1000054767" description="Small ribosomal subunit protein uS15">
    <location>
        <begin position="1"/>
        <end position="90"/>
    </location>
</feature>
<sequence>MALDSAKKAQIVAKFARKEGDTGSPEVQIALLTARITELTEHLKIFKKDFSSRLGLLKLVGQRKRLLKYLKNKDYTTYSKLISELGLRDK</sequence>
<keyword id="KW-0687">Ribonucleoprotein</keyword>
<keyword id="KW-0689">Ribosomal protein</keyword>
<keyword id="KW-0694">RNA-binding</keyword>
<keyword id="KW-0699">rRNA-binding</keyword>
<proteinExistence type="inferred from homology"/>
<evidence type="ECO:0000255" key="1">
    <source>
        <dbReference type="HAMAP-Rule" id="MF_01343"/>
    </source>
</evidence>
<evidence type="ECO:0000305" key="2"/>
<dbReference type="EMBL" id="CP000792">
    <property type="protein sequence ID" value="EAT98708.1"/>
    <property type="molecule type" value="Genomic_DNA"/>
</dbReference>
<dbReference type="RefSeq" id="WP_004317763.1">
    <property type="nucleotide sequence ID" value="NC_009802.2"/>
</dbReference>
<dbReference type="SMR" id="A7ZEC8"/>
<dbReference type="STRING" id="360104.CCC13826_2033"/>
<dbReference type="GeneID" id="28662979"/>
<dbReference type="KEGG" id="cco:CCC13826_2033"/>
<dbReference type="eggNOG" id="COG0184">
    <property type="taxonomic scope" value="Bacteria"/>
</dbReference>
<dbReference type="HOGENOM" id="CLU_148518_0_0_7"/>
<dbReference type="OrthoDB" id="9799262at2"/>
<dbReference type="Proteomes" id="UP000001121">
    <property type="component" value="Chromosome"/>
</dbReference>
<dbReference type="GO" id="GO:0022627">
    <property type="term" value="C:cytosolic small ribosomal subunit"/>
    <property type="evidence" value="ECO:0007669"/>
    <property type="project" value="TreeGrafter"/>
</dbReference>
<dbReference type="GO" id="GO:0019843">
    <property type="term" value="F:rRNA binding"/>
    <property type="evidence" value="ECO:0007669"/>
    <property type="project" value="UniProtKB-UniRule"/>
</dbReference>
<dbReference type="GO" id="GO:0003735">
    <property type="term" value="F:structural constituent of ribosome"/>
    <property type="evidence" value="ECO:0007669"/>
    <property type="project" value="InterPro"/>
</dbReference>
<dbReference type="GO" id="GO:0006412">
    <property type="term" value="P:translation"/>
    <property type="evidence" value="ECO:0007669"/>
    <property type="project" value="UniProtKB-UniRule"/>
</dbReference>
<dbReference type="CDD" id="cd00353">
    <property type="entry name" value="Ribosomal_S15p_S13e"/>
    <property type="match status" value="1"/>
</dbReference>
<dbReference type="FunFam" id="1.10.287.10:FF:000002">
    <property type="entry name" value="30S ribosomal protein S15"/>
    <property type="match status" value="1"/>
</dbReference>
<dbReference type="Gene3D" id="6.10.250.3130">
    <property type="match status" value="1"/>
</dbReference>
<dbReference type="Gene3D" id="1.10.287.10">
    <property type="entry name" value="S15/NS1, RNA-binding"/>
    <property type="match status" value="1"/>
</dbReference>
<dbReference type="HAMAP" id="MF_01343_B">
    <property type="entry name" value="Ribosomal_uS15_B"/>
    <property type="match status" value="1"/>
</dbReference>
<dbReference type="InterPro" id="IPR000589">
    <property type="entry name" value="Ribosomal_uS15"/>
</dbReference>
<dbReference type="InterPro" id="IPR005290">
    <property type="entry name" value="Ribosomal_uS15_bac-type"/>
</dbReference>
<dbReference type="InterPro" id="IPR009068">
    <property type="entry name" value="uS15_NS1_RNA-bd_sf"/>
</dbReference>
<dbReference type="NCBIfam" id="TIGR00952">
    <property type="entry name" value="S15_bact"/>
    <property type="match status" value="1"/>
</dbReference>
<dbReference type="PANTHER" id="PTHR23321">
    <property type="entry name" value="RIBOSOMAL PROTEIN S15, BACTERIAL AND ORGANELLAR"/>
    <property type="match status" value="1"/>
</dbReference>
<dbReference type="PANTHER" id="PTHR23321:SF26">
    <property type="entry name" value="SMALL RIBOSOMAL SUBUNIT PROTEIN US15M"/>
    <property type="match status" value="1"/>
</dbReference>
<dbReference type="Pfam" id="PF00312">
    <property type="entry name" value="Ribosomal_S15"/>
    <property type="match status" value="1"/>
</dbReference>
<dbReference type="SMART" id="SM01387">
    <property type="entry name" value="Ribosomal_S15"/>
    <property type="match status" value="1"/>
</dbReference>
<dbReference type="SUPFAM" id="SSF47060">
    <property type="entry name" value="S15/NS1 RNA-binding domain"/>
    <property type="match status" value="1"/>
</dbReference>
<dbReference type="PROSITE" id="PS00362">
    <property type="entry name" value="RIBOSOMAL_S15"/>
    <property type="match status" value="1"/>
</dbReference>
<accession>A7ZEC8</accession>
<organism>
    <name type="scientific">Campylobacter concisus (strain 13826)</name>
    <dbReference type="NCBI Taxonomy" id="360104"/>
    <lineage>
        <taxon>Bacteria</taxon>
        <taxon>Pseudomonadati</taxon>
        <taxon>Campylobacterota</taxon>
        <taxon>Epsilonproteobacteria</taxon>
        <taxon>Campylobacterales</taxon>
        <taxon>Campylobacteraceae</taxon>
        <taxon>Campylobacter</taxon>
    </lineage>
</organism>
<reference key="1">
    <citation type="submission" date="2007-10" db="EMBL/GenBank/DDBJ databases">
        <title>Genome sequence of Campylobacter concisus 13826 isolated from human feces.</title>
        <authorList>
            <person name="Fouts D.E."/>
            <person name="Mongodin E.F."/>
            <person name="Puiu D."/>
            <person name="Sebastian Y."/>
            <person name="Miller W.G."/>
            <person name="Mandrell R.E."/>
            <person name="On S."/>
            <person name="Nelson K.E."/>
        </authorList>
    </citation>
    <scope>NUCLEOTIDE SEQUENCE [LARGE SCALE GENOMIC DNA]</scope>
    <source>
        <strain>13826</strain>
    </source>
</reference>